<keyword id="KW-0963">Cytoplasm</keyword>
<keyword id="KW-0255">Endonuclease</keyword>
<keyword id="KW-0378">Hydrolase</keyword>
<keyword id="KW-0464">Manganese</keyword>
<keyword id="KW-0479">Metal-binding</keyword>
<keyword id="KW-0540">Nuclease</keyword>
<keyword id="KW-1185">Reference proteome</keyword>
<name>RNH2_STRCO</name>
<evidence type="ECO:0000250" key="1"/>
<evidence type="ECO:0000255" key="2">
    <source>
        <dbReference type="PROSITE-ProRule" id="PRU01319"/>
    </source>
</evidence>
<evidence type="ECO:0000305" key="3"/>
<protein>
    <recommendedName>
        <fullName>Ribonuclease HII</fullName>
        <shortName>RNase HII</shortName>
        <ecNumber>3.1.26.4</ecNumber>
    </recommendedName>
</protein>
<organism>
    <name type="scientific">Streptomyces coelicolor (strain ATCC BAA-471 / A3(2) / M145)</name>
    <dbReference type="NCBI Taxonomy" id="100226"/>
    <lineage>
        <taxon>Bacteria</taxon>
        <taxon>Bacillati</taxon>
        <taxon>Actinomycetota</taxon>
        <taxon>Actinomycetes</taxon>
        <taxon>Kitasatosporales</taxon>
        <taxon>Streptomycetaceae</taxon>
        <taxon>Streptomyces</taxon>
        <taxon>Streptomyces albidoflavus group</taxon>
    </lineage>
</organism>
<reference key="1">
    <citation type="journal article" date="2002" name="Nature">
        <title>Complete genome sequence of the model actinomycete Streptomyces coelicolor A3(2).</title>
        <authorList>
            <person name="Bentley S.D."/>
            <person name="Chater K.F."/>
            <person name="Cerdeno-Tarraga A.-M."/>
            <person name="Challis G.L."/>
            <person name="Thomson N.R."/>
            <person name="James K.D."/>
            <person name="Harris D.E."/>
            <person name="Quail M.A."/>
            <person name="Kieser H."/>
            <person name="Harper D."/>
            <person name="Bateman A."/>
            <person name="Brown S."/>
            <person name="Chandra G."/>
            <person name="Chen C.W."/>
            <person name="Collins M."/>
            <person name="Cronin A."/>
            <person name="Fraser A."/>
            <person name="Goble A."/>
            <person name="Hidalgo J."/>
            <person name="Hornsby T."/>
            <person name="Howarth S."/>
            <person name="Huang C.-H."/>
            <person name="Kieser T."/>
            <person name="Larke L."/>
            <person name="Murphy L.D."/>
            <person name="Oliver K."/>
            <person name="O'Neil S."/>
            <person name="Rabbinowitsch E."/>
            <person name="Rajandream M.A."/>
            <person name="Rutherford K.M."/>
            <person name="Rutter S."/>
            <person name="Seeger K."/>
            <person name="Saunders D."/>
            <person name="Sharp S."/>
            <person name="Squares R."/>
            <person name="Squares S."/>
            <person name="Taylor K."/>
            <person name="Warren T."/>
            <person name="Wietzorrek A."/>
            <person name="Woodward J.R."/>
            <person name="Barrell B.G."/>
            <person name="Parkhill J."/>
            <person name="Hopwood D.A."/>
        </authorList>
    </citation>
    <scope>NUCLEOTIDE SEQUENCE [LARGE SCALE GENOMIC DNA]</scope>
    <source>
        <strain>ATCC BAA-471 / A3(2) / M145</strain>
    </source>
</reference>
<proteinExistence type="inferred from homology"/>
<gene>
    <name type="primary">rnhB</name>
    <name type="ordered locus">SCO5812</name>
    <name type="ORF">SC5B8.02</name>
</gene>
<comment type="function">
    <text evidence="1">Endonuclease that specifically degrades the RNA of RNA-DNA hybrids.</text>
</comment>
<comment type="catalytic activity">
    <reaction>
        <text>Endonucleolytic cleavage to 5'-phosphomonoester.</text>
        <dbReference type="EC" id="3.1.26.4"/>
    </reaction>
</comment>
<comment type="cofactor">
    <cofactor evidence="1">
        <name>Mn(2+)</name>
        <dbReference type="ChEBI" id="CHEBI:29035"/>
    </cofactor>
    <cofactor evidence="1">
        <name>Mg(2+)</name>
        <dbReference type="ChEBI" id="CHEBI:18420"/>
    </cofactor>
    <text evidence="1">Manganese or magnesium. Binds 1 divalent metal ion per monomer in the absence of substrate. May bind a second metal ion after substrate binding.</text>
</comment>
<comment type="subcellular location">
    <subcellularLocation>
        <location evidence="3">Cytoplasm</location>
    </subcellularLocation>
</comment>
<comment type="similarity">
    <text evidence="3">Belongs to the RNase HII family.</text>
</comment>
<feature type="chain" id="PRO_0000111632" description="Ribonuclease HII">
    <location>
        <begin position="1"/>
        <end position="233"/>
    </location>
</feature>
<feature type="domain" description="RNase H type-2" evidence="2">
    <location>
        <begin position="21"/>
        <end position="211"/>
    </location>
</feature>
<feature type="binding site" evidence="1">
    <location>
        <position position="27"/>
    </location>
    <ligand>
        <name>a divalent metal cation</name>
        <dbReference type="ChEBI" id="CHEBI:60240"/>
    </ligand>
</feature>
<feature type="binding site" evidence="1">
    <location>
        <position position="28"/>
    </location>
    <ligand>
        <name>a divalent metal cation</name>
        <dbReference type="ChEBI" id="CHEBI:60240"/>
    </ligand>
</feature>
<feature type="binding site" evidence="1">
    <location>
        <position position="119"/>
    </location>
    <ligand>
        <name>a divalent metal cation</name>
        <dbReference type="ChEBI" id="CHEBI:60240"/>
    </ligand>
</feature>
<sequence length="233" mass="25327">MPYEPPTHTVERSLRATTGAKIIAGVDEVGRGAWAGPVTVCAAITGLRRPPVGLTDSKLLTIKRRTELEVELRTWVTSYALGHASPEEIDAMGMTAALRLAAVRALGTLPVRPDAVILDGKHDYLGAPWRVRTVIKGDQSCIAVAAASVLAKVQRDKMMAELGVDHADFGFADNAGYPSPVHKAALEERGPTPHHRLSWAYLDALPQWRHLKKVRSWVEGSVPEIEGQLGFDF</sequence>
<dbReference type="EC" id="3.1.26.4"/>
<dbReference type="EMBL" id="AL939125">
    <property type="protein sequence ID" value="CAA18510.1"/>
    <property type="molecule type" value="Genomic_DNA"/>
</dbReference>
<dbReference type="PIR" id="T35186">
    <property type="entry name" value="T35186"/>
</dbReference>
<dbReference type="RefSeq" id="NP_629935.1">
    <property type="nucleotide sequence ID" value="NC_003888.3"/>
</dbReference>
<dbReference type="RefSeq" id="WP_011030471.1">
    <property type="nucleotide sequence ID" value="NZ_VNID01000007.1"/>
</dbReference>
<dbReference type="SMR" id="O69989"/>
<dbReference type="FunCoup" id="O69989">
    <property type="interactions" value="208"/>
</dbReference>
<dbReference type="STRING" id="100226.gene:17763472"/>
<dbReference type="PaxDb" id="100226-SCO5812"/>
<dbReference type="KEGG" id="sco:SCO5812"/>
<dbReference type="PATRIC" id="fig|100226.15.peg.5904"/>
<dbReference type="eggNOG" id="COG0164">
    <property type="taxonomic scope" value="Bacteria"/>
</dbReference>
<dbReference type="HOGENOM" id="CLU_036532_3_0_11"/>
<dbReference type="InParanoid" id="O69989"/>
<dbReference type="OrthoDB" id="9803420at2"/>
<dbReference type="PhylomeDB" id="O69989"/>
<dbReference type="Proteomes" id="UP000001973">
    <property type="component" value="Chromosome"/>
</dbReference>
<dbReference type="GO" id="GO:0005737">
    <property type="term" value="C:cytoplasm"/>
    <property type="evidence" value="ECO:0007669"/>
    <property type="project" value="UniProtKB-SubCell"/>
</dbReference>
<dbReference type="GO" id="GO:0032299">
    <property type="term" value="C:ribonuclease H2 complex"/>
    <property type="evidence" value="ECO:0000318"/>
    <property type="project" value="GO_Central"/>
</dbReference>
<dbReference type="GO" id="GO:0030145">
    <property type="term" value="F:manganese ion binding"/>
    <property type="evidence" value="ECO:0007669"/>
    <property type="project" value="UniProtKB-UniRule"/>
</dbReference>
<dbReference type="GO" id="GO:0003723">
    <property type="term" value="F:RNA binding"/>
    <property type="evidence" value="ECO:0007669"/>
    <property type="project" value="InterPro"/>
</dbReference>
<dbReference type="GO" id="GO:0004523">
    <property type="term" value="F:RNA-DNA hybrid ribonuclease activity"/>
    <property type="evidence" value="ECO:0000318"/>
    <property type="project" value="GO_Central"/>
</dbReference>
<dbReference type="GO" id="GO:0043137">
    <property type="term" value="P:DNA replication, removal of RNA primer"/>
    <property type="evidence" value="ECO:0000318"/>
    <property type="project" value="GO_Central"/>
</dbReference>
<dbReference type="GO" id="GO:0006298">
    <property type="term" value="P:mismatch repair"/>
    <property type="evidence" value="ECO:0000318"/>
    <property type="project" value="GO_Central"/>
</dbReference>
<dbReference type="CDD" id="cd07182">
    <property type="entry name" value="RNase_HII_bacteria_HII_like"/>
    <property type="match status" value="1"/>
</dbReference>
<dbReference type="FunFam" id="3.30.420.10:FF:000167">
    <property type="entry name" value="Ribonuclease HII"/>
    <property type="match status" value="1"/>
</dbReference>
<dbReference type="Gene3D" id="3.30.420.10">
    <property type="entry name" value="Ribonuclease H-like superfamily/Ribonuclease H"/>
    <property type="match status" value="1"/>
</dbReference>
<dbReference type="HAMAP" id="MF_00052_B">
    <property type="entry name" value="RNase_HII_B"/>
    <property type="match status" value="1"/>
</dbReference>
<dbReference type="InterPro" id="IPR022898">
    <property type="entry name" value="RNase_HII"/>
</dbReference>
<dbReference type="InterPro" id="IPR001352">
    <property type="entry name" value="RNase_HII/HIII"/>
</dbReference>
<dbReference type="InterPro" id="IPR024567">
    <property type="entry name" value="RNase_HII/HIII_dom"/>
</dbReference>
<dbReference type="InterPro" id="IPR012337">
    <property type="entry name" value="RNaseH-like_sf"/>
</dbReference>
<dbReference type="InterPro" id="IPR036397">
    <property type="entry name" value="RNaseH_sf"/>
</dbReference>
<dbReference type="NCBIfam" id="NF000595">
    <property type="entry name" value="PRK00015.1-3"/>
    <property type="match status" value="1"/>
</dbReference>
<dbReference type="PANTHER" id="PTHR10954">
    <property type="entry name" value="RIBONUCLEASE H2 SUBUNIT A"/>
    <property type="match status" value="1"/>
</dbReference>
<dbReference type="PANTHER" id="PTHR10954:SF18">
    <property type="entry name" value="RIBONUCLEASE HII"/>
    <property type="match status" value="1"/>
</dbReference>
<dbReference type="Pfam" id="PF01351">
    <property type="entry name" value="RNase_HII"/>
    <property type="match status" value="1"/>
</dbReference>
<dbReference type="SUPFAM" id="SSF53098">
    <property type="entry name" value="Ribonuclease H-like"/>
    <property type="match status" value="1"/>
</dbReference>
<dbReference type="PROSITE" id="PS51975">
    <property type="entry name" value="RNASE_H_2"/>
    <property type="match status" value="1"/>
</dbReference>
<accession>O69989</accession>